<gene>
    <name type="ordered locus">At1g62170</name>
    <name type="ORF">F19K23.10</name>
</gene>
<reference key="1">
    <citation type="journal article" date="2000" name="Nature">
        <title>Sequence and analysis of chromosome 1 of the plant Arabidopsis thaliana.</title>
        <authorList>
            <person name="Theologis A."/>
            <person name="Ecker J.R."/>
            <person name="Palm C.J."/>
            <person name="Federspiel N.A."/>
            <person name="Kaul S."/>
            <person name="White O."/>
            <person name="Alonso J."/>
            <person name="Altafi H."/>
            <person name="Araujo R."/>
            <person name="Bowman C.L."/>
            <person name="Brooks S.Y."/>
            <person name="Buehler E."/>
            <person name="Chan A."/>
            <person name="Chao Q."/>
            <person name="Chen H."/>
            <person name="Cheuk R.F."/>
            <person name="Chin C.W."/>
            <person name="Chung M.K."/>
            <person name="Conn L."/>
            <person name="Conway A.B."/>
            <person name="Conway A.R."/>
            <person name="Creasy T.H."/>
            <person name="Dewar K."/>
            <person name="Dunn P."/>
            <person name="Etgu P."/>
            <person name="Feldblyum T.V."/>
            <person name="Feng J.-D."/>
            <person name="Fong B."/>
            <person name="Fujii C.Y."/>
            <person name="Gill J.E."/>
            <person name="Goldsmith A.D."/>
            <person name="Haas B."/>
            <person name="Hansen N.F."/>
            <person name="Hughes B."/>
            <person name="Huizar L."/>
            <person name="Hunter J.L."/>
            <person name="Jenkins J."/>
            <person name="Johnson-Hopson C."/>
            <person name="Khan S."/>
            <person name="Khaykin E."/>
            <person name="Kim C.J."/>
            <person name="Koo H.L."/>
            <person name="Kremenetskaia I."/>
            <person name="Kurtz D.B."/>
            <person name="Kwan A."/>
            <person name="Lam B."/>
            <person name="Langin-Hooper S."/>
            <person name="Lee A."/>
            <person name="Lee J.M."/>
            <person name="Lenz C.A."/>
            <person name="Li J.H."/>
            <person name="Li Y.-P."/>
            <person name="Lin X."/>
            <person name="Liu S.X."/>
            <person name="Liu Z.A."/>
            <person name="Luros J.S."/>
            <person name="Maiti R."/>
            <person name="Marziali A."/>
            <person name="Militscher J."/>
            <person name="Miranda M."/>
            <person name="Nguyen M."/>
            <person name="Nierman W.C."/>
            <person name="Osborne B.I."/>
            <person name="Pai G."/>
            <person name="Peterson J."/>
            <person name="Pham P.K."/>
            <person name="Rizzo M."/>
            <person name="Rooney T."/>
            <person name="Rowley D."/>
            <person name="Sakano H."/>
            <person name="Salzberg S.L."/>
            <person name="Schwartz J.R."/>
            <person name="Shinn P."/>
            <person name="Southwick A.M."/>
            <person name="Sun H."/>
            <person name="Tallon L.J."/>
            <person name="Tambunga G."/>
            <person name="Toriumi M.J."/>
            <person name="Town C.D."/>
            <person name="Utterback T."/>
            <person name="Van Aken S."/>
            <person name="Vaysberg M."/>
            <person name="Vysotskaia V.S."/>
            <person name="Walker M."/>
            <person name="Wu D."/>
            <person name="Yu G."/>
            <person name="Fraser C.M."/>
            <person name="Venter J.C."/>
            <person name="Davis R.W."/>
        </authorList>
    </citation>
    <scope>NUCLEOTIDE SEQUENCE [LARGE SCALE GENOMIC DNA]</scope>
    <source>
        <strain>cv. Columbia</strain>
    </source>
</reference>
<reference key="2">
    <citation type="journal article" date="2017" name="Plant J.">
        <title>Araport11: a complete reannotation of the Arabidopsis thaliana reference genome.</title>
        <authorList>
            <person name="Cheng C.Y."/>
            <person name="Krishnakumar V."/>
            <person name="Chan A.P."/>
            <person name="Thibaud-Nissen F."/>
            <person name="Schobel S."/>
            <person name="Town C.D."/>
        </authorList>
    </citation>
    <scope>GENOME REANNOTATION</scope>
    <source>
        <strain>cv. Columbia</strain>
    </source>
</reference>
<reference key="3">
    <citation type="journal article" date="2008" name="Funct. Integr. Genomics">
        <title>Serpins in plants and green algae.</title>
        <authorList>
            <person name="Roberts T.H."/>
            <person name="Hejgaard J."/>
        </authorList>
    </citation>
    <scope>TISSUE SPECIFICITY</scope>
    <scope>GENE FAMILY</scope>
    <scope>NOMENCLATURE</scope>
</reference>
<protein>
    <recommendedName>
        <fullName>Probable non-inhibitory serpin-Z5</fullName>
    </recommendedName>
    <alternativeName>
        <fullName>ArathZ5</fullName>
    </alternativeName>
</protein>
<comment type="alternative products">
    <event type="alternative splicing"/>
    <isoform>
        <id>O04582-1</id>
        <name>1</name>
        <sequence type="displayed"/>
    </isoform>
    <text>A number of isoforms are produced. According to EST sequences.</text>
</comment>
<comment type="tissue specificity">
    <text evidence="4">Weakly expressed during seedling development.</text>
</comment>
<comment type="domain">
    <text evidence="1">The reactive center loop (RCL) extends out from the body of the protein and directs binding to the target protease. The protease cleaves the serpin at the reactive site within the RCL, establishing a covalent linkage between the carboxyl group of the serpin reactive site and the serine hydroxyl of the protease. The resulting inactive serpin-protease complex is highly stable (By similarity).</text>
</comment>
<comment type="similarity">
    <text evidence="5">Belongs to the serpin family.</text>
</comment>
<comment type="caution">
    <text evidence="5">According to PubMed:18060440, it is predicted to be a non-inhibitory serpin due to Val-384 and Thr-385 which differ from the conserved residues in the reactive center loop (RCL) that is involved after cleavage in covalent linking and inhibition of the target proteinase.</text>
</comment>
<comment type="sequence caution" evidence="5">
    <conflict type="erroneous gene model prediction">
        <sequence resource="EMBL-CDS" id="AAB60763"/>
    </conflict>
</comment>
<feature type="chain" id="PRO_0000334550" description="Probable non-inhibitory serpin-Z5">
    <location>
        <begin position="1"/>
        <end position="433"/>
    </location>
</feature>
<feature type="region of interest" description="Disordered" evidence="3">
    <location>
        <begin position="1"/>
        <end position="43"/>
    </location>
</feature>
<feature type="region of interest" description="RCL">
    <location>
        <begin position="380"/>
        <end position="404"/>
    </location>
</feature>
<feature type="compositionally biased region" description="Basic and acidic residues" evidence="3">
    <location>
        <begin position="1"/>
        <end position="12"/>
    </location>
</feature>
<feature type="compositionally biased region" description="Basic residues" evidence="3">
    <location>
        <begin position="23"/>
        <end position="36"/>
    </location>
</feature>
<feature type="site" description="Reactive bond" evidence="2">
    <location>
        <begin position="394"/>
        <end position="395"/>
    </location>
</feature>
<accession>O04582</accession>
<dbReference type="EMBL" id="AC000375">
    <property type="protein sequence ID" value="AAB60763.1"/>
    <property type="status" value="ALT_SEQ"/>
    <property type="molecule type" value="Genomic_DNA"/>
</dbReference>
<dbReference type="EMBL" id="CP002684">
    <property type="protein sequence ID" value="AEE33929.1"/>
    <property type="molecule type" value="Genomic_DNA"/>
</dbReference>
<dbReference type="PIR" id="B96648">
    <property type="entry name" value="B96648"/>
</dbReference>
<dbReference type="RefSeq" id="NP_176408.1">
    <molecule id="O04582-1"/>
    <property type="nucleotide sequence ID" value="NM_104898.1"/>
</dbReference>
<dbReference type="SMR" id="O04582"/>
<dbReference type="BioGRID" id="27734">
    <property type="interactions" value="1"/>
</dbReference>
<dbReference type="FunCoup" id="O04582">
    <property type="interactions" value="34"/>
</dbReference>
<dbReference type="IntAct" id="O04582">
    <property type="interactions" value="1"/>
</dbReference>
<dbReference type="STRING" id="3702.O04582"/>
<dbReference type="PaxDb" id="3702-AT1G62170.2"/>
<dbReference type="EnsemblPlants" id="AT1G62170.1">
    <molecule id="O04582-1"/>
    <property type="protein sequence ID" value="AT1G62170.1"/>
    <property type="gene ID" value="AT1G62170"/>
</dbReference>
<dbReference type="GeneID" id="842513"/>
<dbReference type="Gramene" id="AT1G62170.1">
    <molecule id="O04582-1"/>
    <property type="protein sequence ID" value="AT1G62170.1"/>
    <property type="gene ID" value="AT1G62170"/>
</dbReference>
<dbReference type="KEGG" id="ath:AT1G62170"/>
<dbReference type="Araport" id="AT1G62170"/>
<dbReference type="TAIR" id="AT1G62170"/>
<dbReference type="eggNOG" id="KOG2392">
    <property type="taxonomic scope" value="Eukaryota"/>
</dbReference>
<dbReference type="HOGENOM" id="CLU_023330_4_0_1"/>
<dbReference type="InParanoid" id="O04582"/>
<dbReference type="OMA" id="DIHTEFQ"/>
<dbReference type="PhylomeDB" id="O04582"/>
<dbReference type="PRO" id="PR:O04582"/>
<dbReference type="Proteomes" id="UP000006548">
    <property type="component" value="Chromosome 1"/>
</dbReference>
<dbReference type="ExpressionAtlas" id="O04582">
    <property type="expression patterns" value="baseline and differential"/>
</dbReference>
<dbReference type="GO" id="GO:0005615">
    <property type="term" value="C:extracellular space"/>
    <property type="evidence" value="ECO:0007669"/>
    <property type="project" value="InterPro"/>
</dbReference>
<dbReference type="GO" id="GO:0004867">
    <property type="term" value="F:serine-type endopeptidase inhibitor activity"/>
    <property type="evidence" value="ECO:0007669"/>
    <property type="project" value="InterPro"/>
</dbReference>
<dbReference type="CDD" id="cd02043">
    <property type="entry name" value="serpinP_plants"/>
    <property type="match status" value="1"/>
</dbReference>
<dbReference type="Gene3D" id="2.30.39.10">
    <property type="entry name" value="Alpha-1-antitrypsin, domain 1"/>
    <property type="match status" value="1"/>
</dbReference>
<dbReference type="Gene3D" id="3.30.497.10">
    <property type="entry name" value="Antithrombin, subunit I, domain 2"/>
    <property type="match status" value="1"/>
</dbReference>
<dbReference type="InterPro" id="IPR023795">
    <property type="entry name" value="Serpin_CS"/>
</dbReference>
<dbReference type="InterPro" id="IPR023796">
    <property type="entry name" value="Serpin_dom"/>
</dbReference>
<dbReference type="InterPro" id="IPR000215">
    <property type="entry name" value="Serpin_fam"/>
</dbReference>
<dbReference type="InterPro" id="IPR036186">
    <property type="entry name" value="Serpin_sf"/>
</dbReference>
<dbReference type="InterPro" id="IPR042178">
    <property type="entry name" value="Serpin_sf_1"/>
</dbReference>
<dbReference type="InterPro" id="IPR042185">
    <property type="entry name" value="Serpin_sf_2"/>
</dbReference>
<dbReference type="PANTHER" id="PTHR11461:SF347">
    <property type="entry name" value="SERINE PROTEASE INHIBITOR (SERPIN) FAMILY PROTEIN-RELATED"/>
    <property type="match status" value="1"/>
</dbReference>
<dbReference type="PANTHER" id="PTHR11461">
    <property type="entry name" value="SERINE PROTEASE INHIBITOR, SERPIN"/>
    <property type="match status" value="1"/>
</dbReference>
<dbReference type="Pfam" id="PF00079">
    <property type="entry name" value="Serpin"/>
    <property type="match status" value="1"/>
</dbReference>
<dbReference type="SMART" id="SM00093">
    <property type="entry name" value="SERPIN"/>
    <property type="match status" value="1"/>
</dbReference>
<dbReference type="SUPFAM" id="SSF56574">
    <property type="entry name" value="Serpins"/>
    <property type="match status" value="1"/>
</dbReference>
<dbReference type="PROSITE" id="PS00284">
    <property type="entry name" value="SERPIN"/>
    <property type="match status" value="1"/>
</dbReference>
<sequence>MEPKEKKQKLDTSEVASPSLSKTHLKKKKTKKQKIRKSQEITSPSLSKNTDLVIASPSLSNIDVGEAMKKQNDVAIFLTGIVISSVAKNSNFVFSPASINAALTMVAASSGGEQGEELRSFILSFLKSSSTDELNAIFREIASVVLVDGSKKGGPKIAVVNGMWMDQSLSVNPLSKDLFKNFFSAAFAQVDFRSKAEEVRTEVNAWASSHTNGLIKDLLPRGSVTSLTDRVYGSALYFKGTWEEKYSKSMTKCKPFYLLNGTSVSVPFMSSFEKQYIAAYDGFKVLRLPYRQGRDNTNRNFAMYIYLPDKKGELDDLLERMTSTPGFLDSHNPERRVKVGKFRIPKFKIEFGFEASSAFSDFELDVSFYQKTLIEIDEKGTEAVTFTAFRSAYLGCALVKPIDFVADHPFLFLIREEQTGTVLFAGQIFDPSA</sequence>
<keyword id="KW-0025">Alternative splicing</keyword>
<keyword id="KW-1185">Reference proteome</keyword>
<proteinExistence type="evidence at transcript level"/>
<evidence type="ECO:0000250" key="1"/>
<evidence type="ECO:0000255" key="2"/>
<evidence type="ECO:0000256" key="3">
    <source>
        <dbReference type="SAM" id="MobiDB-lite"/>
    </source>
</evidence>
<evidence type="ECO:0000269" key="4">
    <source>
    </source>
</evidence>
<evidence type="ECO:0000305" key="5"/>
<organism>
    <name type="scientific">Arabidopsis thaliana</name>
    <name type="common">Mouse-ear cress</name>
    <dbReference type="NCBI Taxonomy" id="3702"/>
    <lineage>
        <taxon>Eukaryota</taxon>
        <taxon>Viridiplantae</taxon>
        <taxon>Streptophyta</taxon>
        <taxon>Embryophyta</taxon>
        <taxon>Tracheophyta</taxon>
        <taxon>Spermatophyta</taxon>
        <taxon>Magnoliopsida</taxon>
        <taxon>eudicotyledons</taxon>
        <taxon>Gunneridae</taxon>
        <taxon>Pentapetalae</taxon>
        <taxon>rosids</taxon>
        <taxon>malvids</taxon>
        <taxon>Brassicales</taxon>
        <taxon>Brassicaceae</taxon>
        <taxon>Camelineae</taxon>
        <taxon>Arabidopsis</taxon>
    </lineage>
</organism>
<name>SPZ5_ARATH</name>